<keyword id="KW-0488">Methylation</keyword>
<keyword id="KW-0687">Ribonucleoprotein</keyword>
<keyword id="KW-0689">Ribosomal protein</keyword>
<keyword id="KW-0694">RNA-binding</keyword>
<keyword id="KW-0699">rRNA-binding</keyword>
<accession>A5IHS5</accession>
<protein>
    <recommendedName>
        <fullName evidence="1">Large ribosomal subunit protein uL11</fullName>
    </recommendedName>
    <alternativeName>
        <fullName evidence="2">50S ribosomal protein L11</fullName>
    </alternativeName>
</protein>
<reference key="1">
    <citation type="submission" date="2006-11" db="EMBL/GenBank/DDBJ databases">
        <title>Identification and characterization of a new conjugation/ type IVA secretion system (trb/tra) of L. pneumophila Corby localized on a mobile genomic island.</title>
        <authorList>
            <person name="Gloeckner G."/>
            <person name="Albert-Weissenberger C."/>
            <person name="Weinmann E."/>
            <person name="Jacobi S."/>
            <person name="Schunder E."/>
            <person name="Steinert M."/>
            <person name="Buchrieser C."/>
            <person name="Hacker J."/>
            <person name="Heuner K."/>
        </authorList>
    </citation>
    <scope>NUCLEOTIDE SEQUENCE [LARGE SCALE GENOMIC DNA]</scope>
    <source>
        <strain>Corby</strain>
    </source>
</reference>
<proteinExistence type="inferred from homology"/>
<comment type="function">
    <text evidence="1">Forms part of the ribosomal stalk which helps the ribosome interact with GTP-bound translation factors.</text>
</comment>
<comment type="subunit">
    <text evidence="1">Part of the ribosomal stalk of the 50S ribosomal subunit. Interacts with L10 and the large rRNA to form the base of the stalk. L10 forms an elongated spine to which L12 dimers bind in a sequential fashion forming a multimeric L10(L12)X complex.</text>
</comment>
<comment type="PTM">
    <text evidence="1">One or more lysine residues are methylated.</text>
</comment>
<comment type="similarity">
    <text evidence="1">Belongs to the universal ribosomal protein uL11 family.</text>
</comment>
<sequence length="144" mass="15090">MAKKVEAYIKLQIPAGKANPSPPVGPALGQRGVNIMEFCKAFNAATQQMEQGLPIPVVITVYSDRSFTFITKTPPASVLLKKAAGIQSGSGTPNTKKVAKLNVSQLEEIAKVKKPDLTAADLAAAVRSIAGTARSMGIEVEGLE</sequence>
<name>RL11_LEGPC</name>
<gene>
    <name evidence="1" type="primary">rplK</name>
    <name type="ordered locus">LPC_3025</name>
</gene>
<organism>
    <name type="scientific">Legionella pneumophila (strain Corby)</name>
    <dbReference type="NCBI Taxonomy" id="400673"/>
    <lineage>
        <taxon>Bacteria</taxon>
        <taxon>Pseudomonadati</taxon>
        <taxon>Pseudomonadota</taxon>
        <taxon>Gammaproteobacteria</taxon>
        <taxon>Legionellales</taxon>
        <taxon>Legionellaceae</taxon>
        <taxon>Legionella</taxon>
    </lineage>
</organism>
<feature type="chain" id="PRO_1000046201" description="Large ribosomal subunit protein uL11">
    <location>
        <begin position="1"/>
        <end position="144"/>
    </location>
</feature>
<evidence type="ECO:0000255" key="1">
    <source>
        <dbReference type="HAMAP-Rule" id="MF_00736"/>
    </source>
</evidence>
<evidence type="ECO:0000305" key="2"/>
<dbReference type="EMBL" id="CP000675">
    <property type="protein sequence ID" value="ABQ56925.1"/>
    <property type="molecule type" value="Genomic_DNA"/>
</dbReference>
<dbReference type="RefSeq" id="WP_010946069.1">
    <property type="nucleotide sequence ID" value="NZ_JAPMSS010000006.1"/>
</dbReference>
<dbReference type="SMR" id="A5IHS5"/>
<dbReference type="GeneID" id="57034321"/>
<dbReference type="KEGG" id="lpc:LPC_3025"/>
<dbReference type="HOGENOM" id="CLU_074237_2_0_6"/>
<dbReference type="GO" id="GO:0022625">
    <property type="term" value="C:cytosolic large ribosomal subunit"/>
    <property type="evidence" value="ECO:0007669"/>
    <property type="project" value="TreeGrafter"/>
</dbReference>
<dbReference type="GO" id="GO:0070180">
    <property type="term" value="F:large ribosomal subunit rRNA binding"/>
    <property type="evidence" value="ECO:0007669"/>
    <property type="project" value="UniProtKB-UniRule"/>
</dbReference>
<dbReference type="GO" id="GO:0003735">
    <property type="term" value="F:structural constituent of ribosome"/>
    <property type="evidence" value="ECO:0007669"/>
    <property type="project" value="InterPro"/>
</dbReference>
<dbReference type="GO" id="GO:0006412">
    <property type="term" value="P:translation"/>
    <property type="evidence" value="ECO:0007669"/>
    <property type="project" value="UniProtKB-UniRule"/>
</dbReference>
<dbReference type="CDD" id="cd00349">
    <property type="entry name" value="Ribosomal_L11"/>
    <property type="match status" value="1"/>
</dbReference>
<dbReference type="FunFam" id="1.10.10.250:FF:000001">
    <property type="entry name" value="50S ribosomal protein L11"/>
    <property type="match status" value="1"/>
</dbReference>
<dbReference type="FunFam" id="3.30.1550.10:FF:000001">
    <property type="entry name" value="50S ribosomal protein L11"/>
    <property type="match status" value="1"/>
</dbReference>
<dbReference type="Gene3D" id="1.10.10.250">
    <property type="entry name" value="Ribosomal protein L11, C-terminal domain"/>
    <property type="match status" value="1"/>
</dbReference>
<dbReference type="Gene3D" id="3.30.1550.10">
    <property type="entry name" value="Ribosomal protein L11/L12, N-terminal domain"/>
    <property type="match status" value="1"/>
</dbReference>
<dbReference type="HAMAP" id="MF_00736">
    <property type="entry name" value="Ribosomal_uL11"/>
    <property type="match status" value="1"/>
</dbReference>
<dbReference type="InterPro" id="IPR000911">
    <property type="entry name" value="Ribosomal_uL11"/>
</dbReference>
<dbReference type="InterPro" id="IPR006519">
    <property type="entry name" value="Ribosomal_uL11_bac-typ"/>
</dbReference>
<dbReference type="InterPro" id="IPR020783">
    <property type="entry name" value="Ribosomal_uL11_C"/>
</dbReference>
<dbReference type="InterPro" id="IPR036769">
    <property type="entry name" value="Ribosomal_uL11_C_sf"/>
</dbReference>
<dbReference type="InterPro" id="IPR020785">
    <property type="entry name" value="Ribosomal_uL11_CS"/>
</dbReference>
<dbReference type="InterPro" id="IPR020784">
    <property type="entry name" value="Ribosomal_uL11_N"/>
</dbReference>
<dbReference type="InterPro" id="IPR036796">
    <property type="entry name" value="Ribosomal_uL11_N_sf"/>
</dbReference>
<dbReference type="NCBIfam" id="TIGR01632">
    <property type="entry name" value="L11_bact"/>
    <property type="match status" value="1"/>
</dbReference>
<dbReference type="PANTHER" id="PTHR11661">
    <property type="entry name" value="60S RIBOSOMAL PROTEIN L12"/>
    <property type="match status" value="1"/>
</dbReference>
<dbReference type="PANTHER" id="PTHR11661:SF1">
    <property type="entry name" value="LARGE RIBOSOMAL SUBUNIT PROTEIN UL11M"/>
    <property type="match status" value="1"/>
</dbReference>
<dbReference type="Pfam" id="PF00298">
    <property type="entry name" value="Ribosomal_L11"/>
    <property type="match status" value="1"/>
</dbReference>
<dbReference type="Pfam" id="PF03946">
    <property type="entry name" value="Ribosomal_L11_N"/>
    <property type="match status" value="1"/>
</dbReference>
<dbReference type="SMART" id="SM00649">
    <property type="entry name" value="RL11"/>
    <property type="match status" value="1"/>
</dbReference>
<dbReference type="SUPFAM" id="SSF54747">
    <property type="entry name" value="Ribosomal L11/L12e N-terminal domain"/>
    <property type="match status" value="1"/>
</dbReference>
<dbReference type="SUPFAM" id="SSF46906">
    <property type="entry name" value="Ribosomal protein L11, C-terminal domain"/>
    <property type="match status" value="1"/>
</dbReference>
<dbReference type="PROSITE" id="PS00359">
    <property type="entry name" value="RIBOSOMAL_L11"/>
    <property type="match status" value="1"/>
</dbReference>